<sequence>MGVFRFISISLAAVSAANAAQILSMPHAQTVPNSYIVMMKDDTSDDDFKHHQSWLQSTHTHNITRRATIQNAGMRHKYNFNKMKGYSGIFDDETIKDIAKDPKVMFVEPDTIVSVHGKVEQSNVPSWGLARISNPQPGADSYTYDSSAGEGITVYSVDTGVDVNHEDFEGRAIWGSNQVNDGDDRDGSGHGTHTSGTMVGKMYGIAKKAKLVAVKVLGNDGSGPTSGIVAGINWSVEHARQNGGTKKAVMNMSLGGSSSSALNRAAAQAVEQGMFLSVAAGNDNQDAQSSSPASEPSVCTVGSSAEDDSRSSFSNWGPAIDIFAPGSNIVSARPGGGSQSMSGTSMAAPHVAGLAAYLMALEGISGGAVCDRLKELGTSSITDAGPGTPTNVLINNGGAKGGQPNPNPAPAPSPSQPSEPQQPTPSQPGQPGEPFPGEPFPGEPFPGQPFPGESAPAPAPAPMPPTPQHPHTPYPGGDNFDFDSFWKKYFGGEHWRKMFSSFWN</sequence>
<proteinExistence type="evidence at transcript level"/>
<organism>
    <name type="scientific">Trichophyton rubrum</name>
    <name type="common">Athlete's foot fungus</name>
    <name type="synonym">Epidermophyton rubrum</name>
    <dbReference type="NCBI Taxonomy" id="5551"/>
    <lineage>
        <taxon>Eukaryota</taxon>
        <taxon>Fungi</taxon>
        <taxon>Dikarya</taxon>
        <taxon>Ascomycota</taxon>
        <taxon>Pezizomycotina</taxon>
        <taxon>Eurotiomycetes</taxon>
        <taxon>Eurotiomycetidae</taxon>
        <taxon>Onygenales</taxon>
        <taxon>Arthrodermataceae</taxon>
        <taxon>Trichophyton</taxon>
    </lineage>
</organism>
<keyword id="KW-0325">Glycoprotein</keyword>
<keyword id="KW-0378">Hydrolase</keyword>
<keyword id="KW-0645">Protease</keyword>
<keyword id="KW-0964">Secreted</keyword>
<keyword id="KW-0720">Serine protease</keyword>
<keyword id="KW-0732">Signal</keyword>
<keyword id="KW-0843">Virulence</keyword>
<keyword id="KW-0865">Zymogen</keyword>
<dbReference type="EC" id="3.4.21.-"/>
<dbReference type="EMBL" id="AY343499">
    <property type="protein sequence ID" value="AAR11460.1"/>
    <property type="molecule type" value="Genomic_DNA"/>
</dbReference>
<dbReference type="SMR" id="Q69F58"/>
<dbReference type="MEROPS" id="S08.025"/>
<dbReference type="GlyCosmos" id="Q69F58">
    <property type="glycosylation" value="2 sites, No reported glycans"/>
</dbReference>
<dbReference type="VEuPathDB" id="FungiDB:TERG_03400"/>
<dbReference type="OMA" id="HTHNITR"/>
<dbReference type="GO" id="GO:0005576">
    <property type="term" value="C:extracellular region"/>
    <property type="evidence" value="ECO:0007669"/>
    <property type="project" value="UniProtKB-SubCell"/>
</dbReference>
<dbReference type="GO" id="GO:0004252">
    <property type="term" value="F:serine-type endopeptidase activity"/>
    <property type="evidence" value="ECO:0007669"/>
    <property type="project" value="InterPro"/>
</dbReference>
<dbReference type="GO" id="GO:0006508">
    <property type="term" value="P:proteolysis"/>
    <property type="evidence" value="ECO:0007669"/>
    <property type="project" value="UniProtKB-KW"/>
</dbReference>
<dbReference type="CDD" id="cd04077">
    <property type="entry name" value="Peptidases_S8_PCSK9_ProteinaseK_like"/>
    <property type="match status" value="1"/>
</dbReference>
<dbReference type="FunFam" id="3.40.50.200:FF:000014">
    <property type="entry name" value="Proteinase K"/>
    <property type="match status" value="1"/>
</dbReference>
<dbReference type="Gene3D" id="3.30.70.80">
    <property type="entry name" value="Peptidase S8 propeptide/proteinase inhibitor I9"/>
    <property type="match status" value="1"/>
</dbReference>
<dbReference type="Gene3D" id="3.40.50.200">
    <property type="entry name" value="Peptidase S8/S53 domain"/>
    <property type="match status" value="1"/>
</dbReference>
<dbReference type="InterPro" id="IPR034193">
    <property type="entry name" value="PCSK9_ProteinaseK-like"/>
</dbReference>
<dbReference type="InterPro" id="IPR000209">
    <property type="entry name" value="Peptidase_S8/S53_dom"/>
</dbReference>
<dbReference type="InterPro" id="IPR036852">
    <property type="entry name" value="Peptidase_S8/S53_dom_sf"/>
</dbReference>
<dbReference type="InterPro" id="IPR023828">
    <property type="entry name" value="Peptidase_S8_Ser-AS"/>
</dbReference>
<dbReference type="InterPro" id="IPR050131">
    <property type="entry name" value="Peptidase_S8_subtilisin-like"/>
</dbReference>
<dbReference type="InterPro" id="IPR015500">
    <property type="entry name" value="Peptidase_S8_subtilisin-rel"/>
</dbReference>
<dbReference type="InterPro" id="IPR010259">
    <property type="entry name" value="S8pro/Inhibitor_I9"/>
</dbReference>
<dbReference type="InterPro" id="IPR037045">
    <property type="entry name" value="S8pro/Inhibitor_I9_sf"/>
</dbReference>
<dbReference type="PANTHER" id="PTHR43806:SF58">
    <property type="entry name" value="ALKALINE PROTEASE 1-RELATED"/>
    <property type="match status" value="1"/>
</dbReference>
<dbReference type="PANTHER" id="PTHR43806">
    <property type="entry name" value="PEPTIDASE S8"/>
    <property type="match status" value="1"/>
</dbReference>
<dbReference type="Pfam" id="PF05922">
    <property type="entry name" value="Inhibitor_I9"/>
    <property type="match status" value="1"/>
</dbReference>
<dbReference type="Pfam" id="PF00082">
    <property type="entry name" value="Peptidase_S8"/>
    <property type="match status" value="1"/>
</dbReference>
<dbReference type="PRINTS" id="PR00723">
    <property type="entry name" value="SUBTILISIN"/>
</dbReference>
<dbReference type="SUPFAM" id="SSF54897">
    <property type="entry name" value="Protease propeptides/inhibitors"/>
    <property type="match status" value="1"/>
</dbReference>
<dbReference type="SUPFAM" id="SSF52743">
    <property type="entry name" value="Subtilisin-like"/>
    <property type="match status" value="1"/>
</dbReference>
<dbReference type="PROSITE" id="PS51892">
    <property type="entry name" value="SUBTILASE"/>
    <property type="match status" value="1"/>
</dbReference>
<dbReference type="PROSITE" id="PS00138">
    <property type="entry name" value="SUBTILASE_SER"/>
    <property type="match status" value="1"/>
</dbReference>
<protein>
    <recommendedName>
        <fullName>Subtilisin-like protease 1</fullName>
        <ecNumber>3.4.21.-</ecNumber>
    </recommendedName>
</protein>
<feature type="signal peptide" evidence="2">
    <location>
        <begin position="1"/>
        <end position="19"/>
    </location>
</feature>
<feature type="propeptide" id="PRO_0000380759" evidence="1">
    <location>
        <begin position="20"/>
        <end position="116"/>
    </location>
</feature>
<feature type="chain" id="PRO_0000380760" description="Subtilisin-like protease 1">
    <location>
        <begin position="117"/>
        <end position="504"/>
    </location>
</feature>
<feature type="domain" description="Inhibitor I9" evidence="2">
    <location>
        <begin position="34"/>
        <end position="116"/>
    </location>
</feature>
<feature type="domain" description="Peptidase S8" evidence="3">
    <location>
        <begin position="126"/>
        <end position="400"/>
    </location>
</feature>
<feature type="region of interest" description="Disordered" evidence="4">
    <location>
        <begin position="172"/>
        <end position="198"/>
    </location>
</feature>
<feature type="region of interest" description="Disordered" evidence="4">
    <location>
        <begin position="282"/>
        <end position="312"/>
    </location>
</feature>
<feature type="region of interest" description="Disordered" evidence="4">
    <location>
        <begin position="378"/>
        <end position="483"/>
    </location>
</feature>
<feature type="compositionally biased region" description="Polar residues" evidence="4">
    <location>
        <begin position="282"/>
        <end position="294"/>
    </location>
</feature>
<feature type="compositionally biased region" description="Polar residues" evidence="4">
    <location>
        <begin position="378"/>
        <end position="394"/>
    </location>
</feature>
<feature type="compositionally biased region" description="Pro residues" evidence="4">
    <location>
        <begin position="405"/>
        <end position="449"/>
    </location>
</feature>
<feature type="compositionally biased region" description="Pro residues" evidence="4">
    <location>
        <begin position="457"/>
        <end position="473"/>
    </location>
</feature>
<feature type="active site" description="Charge relay system" evidence="3">
    <location>
        <position position="158"/>
    </location>
</feature>
<feature type="active site" description="Charge relay system" evidence="3">
    <location>
        <position position="190"/>
    </location>
</feature>
<feature type="active site" description="Charge relay system" evidence="3">
    <location>
        <position position="345"/>
    </location>
</feature>
<feature type="glycosylation site" description="N-linked (GlcNAc...) asparagine" evidence="2">
    <location>
        <position position="233"/>
    </location>
</feature>
<feature type="glycosylation site" description="N-linked (GlcNAc...) asparagine" evidence="2">
    <location>
        <position position="251"/>
    </location>
</feature>
<accession>Q69F58</accession>
<name>SUB1_TRIRU</name>
<reference key="1">
    <citation type="journal article" date="2004" name="Gene">
        <title>Secreted subtilisin gene family in Trichophyton rubrum.</title>
        <authorList>
            <person name="Jousson O."/>
            <person name="Lechenne B."/>
            <person name="Bontems O."/>
            <person name="Mignon B."/>
            <person name="Reichard U."/>
            <person name="Barblan J."/>
            <person name="Quadroni M."/>
            <person name="Monod M."/>
        </authorList>
    </citation>
    <scope>NUCLEOTIDE SEQUENCE [GENOMIC DNA]</scope>
</reference>
<reference key="2">
    <citation type="journal article" date="2009" name="Eukaryot. Cell">
        <title>Gene expression profiling in the human pathogenic dermatophyte Trichophyton rubrum during growth on proteins.</title>
        <authorList>
            <person name="Zaugg C."/>
            <person name="Monod M."/>
            <person name="Weber J."/>
            <person name="Harshman K."/>
            <person name="Pradervand S."/>
            <person name="Thomas J."/>
            <person name="Bueno M."/>
            <person name="Giddey K."/>
            <person name="Staib P."/>
        </authorList>
    </citation>
    <scope>INDUCTION</scope>
</reference>
<comment type="function">
    <text evidence="1">Secreted subtilisin-like serine protease with keratinolytic activity that contributes to pathogenicity.</text>
</comment>
<comment type="subcellular location">
    <subcellularLocation>
        <location evidence="1">Secreted</location>
    </subcellularLocation>
</comment>
<comment type="induction">
    <text evidence="5">Expression is strongly increased during growth on protein-rich medium containing keratin.</text>
</comment>
<comment type="similarity">
    <text evidence="6">Belongs to the peptidase S8 family.</text>
</comment>
<evidence type="ECO:0000250" key="1"/>
<evidence type="ECO:0000255" key="2"/>
<evidence type="ECO:0000255" key="3">
    <source>
        <dbReference type="PROSITE-ProRule" id="PRU01240"/>
    </source>
</evidence>
<evidence type="ECO:0000256" key="4">
    <source>
        <dbReference type="SAM" id="MobiDB-lite"/>
    </source>
</evidence>
<evidence type="ECO:0000269" key="5">
    <source>
    </source>
</evidence>
<evidence type="ECO:0000305" key="6"/>
<gene>
    <name type="primary">SUB1</name>
</gene>